<reference key="1">
    <citation type="submission" date="2006-06" db="EMBL/GenBank/DDBJ databases">
        <authorList>
            <consortium name="NIH - Mammalian Gene Collection (MGC) project"/>
        </authorList>
    </citation>
    <scope>NUCLEOTIDE SEQUENCE [LARGE SCALE MRNA]</scope>
    <source>
        <strain>Hereford</strain>
        <tissue>Thalamus</tissue>
    </source>
</reference>
<proteinExistence type="evidence at transcript level"/>
<gene>
    <name type="primary">TAF9</name>
</gene>
<organism>
    <name type="scientific">Bos taurus</name>
    <name type="common">Bovine</name>
    <dbReference type="NCBI Taxonomy" id="9913"/>
    <lineage>
        <taxon>Eukaryota</taxon>
        <taxon>Metazoa</taxon>
        <taxon>Chordata</taxon>
        <taxon>Craniata</taxon>
        <taxon>Vertebrata</taxon>
        <taxon>Euteleostomi</taxon>
        <taxon>Mammalia</taxon>
        <taxon>Eutheria</taxon>
        <taxon>Laurasiatheria</taxon>
        <taxon>Artiodactyla</taxon>
        <taxon>Ruminantia</taxon>
        <taxon>Pecora</taxon>
        <taxon>Bovidae</taxon>
        <taxon>Bovinae</taxon>
        <taxon>Bos</taxon>
    </lineage>
</organism>
<protein>
    <recommendedName>
        <fullName>Transcription initiation factor TFIID subunit 9</fullName>
    </recommendedName>
</protein>
<comment type="function">
    <text evidence="2">The TFIID basal transcription factor complex plays a major role in the initiation of RNA polymerase II (Pol II)-dependent transcription. TFIID recognizes and binds promoters with or without a TATA box via its subunit TBP, a TATA-box-binding protein, and promotes assembly of the pre-initiation complex (PIC). The TFIID complex consists of TBP and TBP-associated factors (TAFs), including TAF1, TAF2, TAF3, TAF4, TAF5, TAF6, TAF7, TAF8, TAF9, TAF10, TAF11, TAF12 and TAF13. TAF9 is also a component of the TBP-free TAFII complex (TFTC), the PCAF histone acetylase complex and the STAGA transcription coactivator-HAT complex. TAF9 and its paralog TAF9B are involved in transcriptional activation as well as repression of distinct but overlapping sets of genes. Essential for cell viability. May have a role in gene regulation associated with apoptosis.</text>
</comment>
<comment type="subunit">
    <text evidence="2">Component of the TFIID basal transcription factor complex, composed of TATA-box-binding protein TBP, and a number of TBP-associated factors (TAFs), including TAF1, TAF2, TAF3, TAF4, TAF5, TAF6, TAF7, TAF8, TAF9, TAF10, TAF11, TAF12 and TAF13. Component of the TATA-binding protein-free TAF complex (TFTC), the PCAF histone acetylase complex and the STAGA transcription coactivator-HAT complex. The PCAF complex consists at least of TADA2L/ADA2, SUPT3H/SPT3, TADA3L/ADA3, TAF5L/PAF65-beta, TAF6L/PAF65-alpha, TAF10/TAFII30, TAF12/TAFII20, TAF9/TAFII31 and TRRAP. The STAGA transcription coactivator-HAT complex consists at least of SUPT3H, GCN5L2, SUPT7L, TAF5L, TAF6L, TADA3L, TAD1L, TAF10, TAF12, TRRAP and TAF9. Binds N-terminal domain of p53/TP53 which is essential for transcription. Component of some MLL1/MLL complex, at least composed of the core components KMT2A/MLL1, ASH2L, HCFC1/HCF1, WDR5 and RBBP5, as well as the facultative components BACC1, CHD8, E2F6, HSP70, INO80C, KANSL1, LAS1L, MAX, MCRS1, MGA, MYST1/MOF, PELP1, PHF20, PRP31, RING2, RUVB1/TIP49A, RUVB2/TIP49B, SENP3, TAF1, TAF4, TAF6, TAF7, TAF9 and TEX10. Binds TFIIB and the Herpes simplex virus activator VP16. Forms a heterodimer with TAF6 in a complex with the TAF4B-TAF12 heterodimer. Also interacts with TAF5. Binds directly DNA. Increased DNA binding when complexed with TAF6.</text>
</comment>
<comment type="subcellular location">
    <subcellularLocation>
        <location evidence="1">Nucleus</location>
    </subcellularLocation>
</comment>
<comment type="similarity">
    <text evidence="5">Belongs to the TAF9 family.</text>
</comment>
<comment type="caution">
    <text evidence="5">AK6 and TAF9 were initially considered as products of the same gene since they share two exons. However, they are translated from different initiation codons and reading frames and encode unrelated proteins. This arrangement is conserved in some mammalian species.</text>
</comment>
<sequence length="264" mass="28800">MESGKMASPKSMPKDAQMMAQILKDMGITEYEPRVINQMLEFAFRYVTTILDDAKIYSSHAKKATVDADDVRLAIQCRADQSFTSPPPRDFLLDIARQRNQTPLPLIKPYSGPRLPPDRYCLTAPNYRLKSLQKKASASAGRITVPRLSVGSVTSRPSTPTLGTPTPPAMSVSTKVGTPVSLTGQRFTVQMPTSQSPAVKASIPATSAVQNVLINPSLIGSKNILITTNMVSSQNTANEASNALKRKHDDDDDDDDDDDDYDNL</sequence>
<accession>Q17QQ4</accession>
<evidence type="ECO:0000250" key="1"/>
<evidence type="ECO:0000250" key="2">
    <source>
        <dbReference type="UniProtKB" id="Q16594"/>
    </source>
</evidence>
<evidence type="ECO:0000250" key="3">
    <source>
        <dbReference type="UniProtKB" id="Q8VI33"/>
    </source>
</evidence>
<evidence type="ECO:0000256" key="4">
    <source>
        <dbReference type="SAM" id="MobiDB-lite"/>
    </source>
</evidence>
<evidence type="ECO:0000305" key="5"/>
<feature type="chain" id="PRO_0000268196" description="Transcription initiation factor TFIID subunit 9">
    <location>
        <begin position="1"/>
        <end position="264"/>
    </location>
</feature>
<feature type="region of interest" description="Disordered" evidence="4">
    <location>
        <begin position="151"/>
        <end position="176"/>
    </location>
</feature>
<feature type="region of interest" description="Disordered" evidence="4">
    <location>
        <begin position="234"/>
        <end position="264"/>
    </location>
</feature>
<feature type="compositionally biased region" description="Low complexity" evidence="4">
    <location>
        <begin position="154"/>
        <end position="164"/>
    </location>
</feature>
<feature type="compositionally biased region" description="Acidic residues" evidence="4">
    <location>
        <begin position="250"/>
        <end position="264"/>
    </location>
</feature>
<feature type="modified residue" description="N6-acetyllysine" evidence="2">
    <location>
        <position position="5"/>
    </location>
</feature>
<feature type="modified residue" description="Phosphoserine" evidence="2">
    <location>
        <position position="149"/>
    </location>
</feature>
<feature type="modified residue" description="Phosphoserine" evidence="2">
    <location>
        <position position="152"/>
    </location>
</feature>
<feature type="modified residue" description="Phosphoserine" evidence="3">
    <location>
        <position position="155"/>
    </location>
</feature>
<feature type="modified residue" description="Phosphoserine" evidence="2">
    <location>
        <position position="158"/>
    </location>
</feature>
<feature type="modified residue" description="Phosphothreonine" evidence="2">
    <location>
        <position position="159"/>
    </location>
</feature>
<feature type="modified residue" description="Phosphothreonine" evidence="2">
    <location>
        <position position="161"/>
    </location>
</feature>
<feature type="modified residue" description="Phosphothreonine" evidence="3">
    <location>
        <position position="164"/>
    </location>
</feature>
<feature type="modified residue" description="Phosphothreonine" evidence="2">
    <location>
        <position position="178"/>
    </location>
</feature>
<feature type="modified residue" description="Phosphoserine" evidence="2">
    <location>
        <position position="181"/>
    </location>
</feature>
<feature type="modified residue" description="Phosphoserine" evidence="2">
    <location>
        <position position="196"/>
    </location>
</feature>
<dbReference type="EMBL" id="BC118236">
    <property type="protein sequence ID" value="AAI18237.1"/>
    <property type="molecule type" value="mRNA"/>
</dbReference>
<dbReference type="RefSeq" id="NP_001069443.1">
    <property type="nucleotide sequence ID" value="NM_001075975.1"/>
</dbReference>
<dbReference type="SMR" id="Q17QQ4"/>
<dbReference type="FunCoup" id="Q17QQ4">
    <property type="interactions" value="2788"/>
</dbReference>
<dbReference type="STRING" id="9913.ENSBTAP00000035237"/>
<dbReference type="PaxDb" id="9913-ENSBTAP00000035237"/>
<dbReference type="Ensembl" id="ENSBTAT00000113592.1">
    <property type="protein sequence ID" value="ENSBTAP00000100664.1"/>
    <property type="gene ID" value="ENSBTAG00000057772.1"/>
</dbReference>
<dbReference type="GeneID" id="532936"/>
<dbReference type="KEGG" id="bta:532936"/>
<dbReference type="CTD" id="6880"/>
<dbReference type="VEuPathDB" id="HostDB:ENSBTAG00000027980"/>
<dbReference type="eggNOG" id="KOG3334">
    <property type="taxonomic scope" value="Eukaryota"/>
</dbReference>
<dbReference type="GeneTree" id="ENSGT00940000155097"/>
<dbReference type="HOGENOM" id="CLU_068315_2_0_1"/>
<dbReference type="InParanoid" id="Q17QQ4"/>
<dbReference type="OMA" id="IRHNSDH"/>
<dbReference type="OrthoDB" id="341924at2759"/>
<dbReference type="TreeFam" id="TF351417"/>
<dbReference type="Reactome" id="R-BTA-674695">
    <property type="pathway name" value="RNA Polymerase II Pre-transcription Events"/>
</dbReference>
<dbReference type="Reactome" id="R-BTA-6804756">
    <property type="pathway name" value="Regulation of TP53 Activity through Phosphorylation"/>
</dbReference>
<dbReference type="Reactome" id="R-BTA-6807505">
    <property type="pathway name" value="RNA polymerase II transcribes snRNA genes"/>
</dbReference>
<dbReference type="Reactome" id="R-BTA-73776">
    <property type="pathway name" value="RNA Polymerase II Promoter Escape"/>
</dbReference>
<dbReference type="Reactome" id="R-BTA-73779">
    <property type="pathway name" value="RNA Polymerase II Transcription Pre-Initiation And Promoter Opening"/>
</dbReference>
<dbReference type="Reactome" id="R-BTA-75953">
    <property type="pathway name" value="RNA Polymerase II Transcription Initiation"/>
</dbReference>
<dbReference type="Reactome" id="R-BTA-76042">
    <property type="pathway name" value="RNA Polymerase II Transcription Initiation And Promoter Clearance"/>
</dbReference>
<dbReference type="Proteomes" id="UP000009136">
    <property type="component" value="Chromosome 20"/>
</dbReference>
<dbReference type="Bgee" id="ENSBTAG00000027980">
    <property type="expression patterns" value="Expressed in semen and 105 other cell types or tissues"/>
</dbReference>
<dbReference type="GO" id="GO:0071339">
    <property type="term" value="C:MLL1 complex"/>
    <property type="evidence" value="ECO:0000250"/>
    <property type="project" value="UniProtKB"/>
</dbReference>
<dbReference type="GO" id="GO:0070761">
    <property type="term" value="C:pre-snoRNP complex"/>
    <property type="evidence" value="ECO:0007669"/>
    <property type="project" value="Ensembl"/>
</dbReference>
<dbReference type="GO" id="GO:0000124">
    <property type="term" value="C:SAGA complex"/>
    <property type="evidence" value="ECO:0000318"/>
    <property type="project" value="GO_Central"/>
</dbReference>
<dbReference type="GO" id="GO:0005669">
    <property type="term" value="C:transcription factor TFIID complex"/>
    <property type="evidence" value="ECO:0000318"/>
    <property type="project" value="GO_Central"/>
</dbReference>
<dbReference type="GO" id="GO:0033276">
    <property type="term" value="C:transcription factor TFTC complex"/>
    <property type="evidence" value="ECO:0000318"/>
    <property type="project" value="GO_Central"/>
</dbReference>
<dbReference type="GO" id="GO:0051117">
    <property type="term" value="F:ATPase binding"/>
    <property type="evidence" value="ECO:0007669"/>
    <property type="project" value="Ensembl"/>
</dbReference>
<dbReference type="GO" id="GO:0070742">
    <property type="term" value="F:C2H2 zinc finger domain binding"/>
    <property type="evidence" value="ECO:0007669"/>
    <property type="project" value="Ensembl"/>
</dbReference>
<dbReference type="GO" id="GO:0140297">
    <property type="term" value="F:DNA-binding transcription factor binding"/>
    <property type="evidence" value="ECO:0007669"/>
    <property type="project" value="Ensembl"/>
</dbReference>
<dbReference type="GO" id="GO:0004402">
    <property type="term" value="F:histone acetyltransferase activity"/>
    <property type="evidence" value="ECO:0007669"/>
    <property type="project" value="Ensembl"/>
</dbReference>
<dbReference type="GO" id="GO:0002039">
    <property type="term" value="F:p53 binding"/>
    <property type="evidence" value="ECO:0007669"/>
    <property type="project" value="Ensembl"/>
</dbReference>
<dbReference type="GO" id="GO:0046982">
    <property type="term" value="F:protein heterodimerization activity"/>
    <property type="evidence" value="ECO:0007669"/>
    <property type="project" value="InterPro"/>
</dbReference>
<dbReference type="GO" id="GO:0000976">
    <property type="term" value="F:transcription cis-regulatory region binding"/>
    <property type="evidence" value="ECO:0007669"/>
    <property type="project" value="Ensembl"/>
</dbReference>
<dbReference type="GO" id="GO:0003713">
    <property type="term" value="F:transcription coactivator activity"/>
    <property type="evidence" value="ECO:0000318"/>
    <property type="project" value="GO_Central"/>
</dbReference>
<dbReference type="GO" id="GO:0000492">
    <property type="term" value="P:box C/D snoRNP assembly"/>
    <property type="evidence" value="ECO:0007669"/>
    <property type="project" value="Ensembl"/>
</dbReference>
<dbReference type="GO" id="GO:0042789">
    <property type="term" value="P:mRNA transcription by RNA polymerase II"/>
    <property type="evidence" value="ECO:0007669"/>
    <property type="project" value="Ensembl"/>
</dbReference>
<dbReference type="GO" id="GO:0043066">
    <property type="term" value="P:negative regulation of apoptotic process"/>
    <property type="evidence" value="ECO:0007669"/>
    <property type="project" value="Ensembl"/>
</dbReference>
<dbReference type="GO" id="GO:0032435">
    <property type="term" value="P:negative regulation of proteasomal ubiquitin-dependent protein catabolic process"/>
    <property type="evidence" value="ECO:0007669"/>
    <property type="project" value="Ensembl"/>
</dbReference>
<dbReference type="GO" id="GO:0060760">
    <property type="term" value="P:positive regulation of response to cytokine stimulus"/>
    <property type="evidence" value="ECO:0007669"/>
    <property type="project" value="Ensembl"/>
</dbReference>
<dbReference type="GO" id="GO:0060261">
    <property type="term" value="P:positive regulation of transcription initiation by RNA polymerase II"/>
    <property type="evidence" value="ECO:0007669"/>
    <property type="project" value="Ensembl"/>
</dbReference>
<dbReference type="GO" id="GO:0050821">
    <property type="term" value="P:protein stabilization"/>
    <property type="evidence" value="ECO:0007669"/>
    <property type="project" value="Ensembl"/>
</dbReference>
<dbReference type="GO" id="GO:0070555">
    <property type="term" value="P:response to interleukin-1"/>
    <property type="evidence" value="ECO:0007669"/>
    <property type="project" value="Ensembl"/>
</dbReference>
<dbReference type="GO" id="GO:0051123">
    <property type="term" value="P:RNA polymerase II preinitiation complex assembly"/>
    <property type="evidence" value="ECO:0000318"/>
    <property type="project" value="GO_Central"/>
</dbReference>
<dbReference type="CDD" id="cd07979">
    <property type="entry name" value="HFD_TAF9"/>
    <property type="match status" value="1"/>
</dbReference>
<dbReference type="FunFam" id="1.10.20.10:FF:000018">
    <property type="entry name" value="Transcription initiation factor TFIID subunit 9"/>
    <property type="match status" value="1"/>
</dbReference>
<dbReference type="Gene3D" id="1.10.20.10">
    <property type="entry name" value="Histone, subunit A"/>
    <property type="match status" value="1"/>
</dbReference>
<dbReference type="InterPro" id="IPR009072">
    <property type="entry name" value="Histone-fold"/>
</dbReference>
<dbReference type="InterPro" id="IPR003162">
    <property type="entry name" value="TFIID-31"/>
</dbReference>
<dbReference type="InterPro" id="IPR051431">
    <property type="entry name" value="TFIID_subunit_9"/>
</dbReference>
<dbReference type="PANTHER" id="PTHR48068">
    <property type="entry name" value="TAF9 RNA POLYMERASE II, TATA BOX-BINDING PROTEIN (TBP)-ASSOCIATED FACTOR"/>
    <property type="match status" value="1"/>
</dbReference>
<dbReference type="PANTHER" id="PTHR48068:SF3">
    <property type="entry name" value="TRANSCRIPTION INITIATION FACTOR TFIID SUBUNIT 9"/>
    <property type="match status" value="1"/>
</dbReference>
<dbReference type="Pfam" id="PF02291">
    <property type="entry name" value="TFIID-31kDa"/>
    <property type="match status" value="1"/>
</dbReference>
<dbReference type="SUPFAM" id="SSF47113">
    <property type="entry name" value="Histone-fold"/>
    <property type="match status" value="1"/>
</dbReference>
<name>TAF9_BOVIN</name>
<keyword id="KW-0007">Acetylation</keyword>
<keyword id="KW-0539">Nucleus</keyword>
<keyword id="KW-0597">Phosphoprotein</keyword>
<keyword id="KW-1185">Reference proteome</keyword>
<keyword id="KW-0804">Transcription</keyword>
<keyword id="KW-0805">Transcription regulation</keyword>